<reference key="1">
    <citation type="journal article" date="2010" name="PLoS Genet.">
        <title>Genome sequence of the plant growth promoting endophytic bacterium Enterobacter sp. 638.</title>
        <authorList>
            <person name="Taghavi S."/>
            <person name="van der Lelie D."/>
            <person name="Hoffman A."/>
            <person name="Zhang Y.B."/>
            <person name="Walla M.D."/>
            <person name="Vangronsveld J."/>
            <person name="Newman L."/>
            <person name="Monchy S."/>
        </authorList>
    </citation>
    <scope>NUCLEOTIDE SEQUENCE [LARGE SCALE GENOMIC DNA]</scope>
    <source>
        <strain>638</strain>
    </source>
</reference>
<comment type="function">
    <text evidence="1">Catalyzes the phosphorylation of methylthioribose into methylthioribose-1-phosphate.</text>
</comment>
<comment type="catalytic activity">
    <reaction evidence="1">
        <text>5-(methylsulfanyl)-D-ribose + ATP = 5-(methylsulfanyl)-alpha-D-ribose 1-phosphate + ADP + H(+)</text>
        <dbReference type="Rhea" id="RHEA:22312"/>
        <dbReference type="ChEBI" id="CHEBI:15378"/>
        <dbReference type="ChEBI" id="CHEBI:30616"/>
        <dbReference type="ChEBI" id="CHEBI:58533"/>
        <dbReference type="ChEBI" id="CHEBI:78440"/>
        <dbReference type="ChEBI" id="CHEBI:456216"/>
        <dbReference type="EC" id="2.7.1.100"/>
    </reaction>
</comment>
<comment type="pathway">
    <text evidence="1">Amino-acid biosynthesis; L-methionine biosynthesis via salvage pathway; S-methyl-5-thio-alpha-D-ribose 1-phosphate from S-methyl-5'-thioadenosine (hydrolase route): step 2/2.</text>
</comment>
<comment type="subunit">
    <text evidence="1">Homodimer.</text>
</comment>
<comment type="similarity">
    <text evidence="1">Belongs to the methylthioribose kinase family.</text>
</comment>
<evidence type="ECO:0000255" key="1">
    <source>
        <dbReference type="HAMAP-Rule" id="MF_01683"/>
    </source>
</evidence>
<dbReference type="EC" id="2.7.1.100" evidence="1"/>
<dbReference type="EMBL" id="CP000653">
    <property type="protein sequence ID" value="ABP59820.1"/>
    <property type="molecule type" value="Genomic_DNA"/>
</dbReference>
<dbReference type="RefSeq" id="WP_012016540.1">
    <property type="nucleotide sequence ID" value="NC_009436.1"/>
</dbReference>
<dbReference type="SMR" id="A4W7Z0"/>
<dbReference type="STRING" id="399742.Ent638_1139"/>
<dbReference type="KEGG" id="ent:Ent638_1139"/>
<dbReference type="eggNOG" id="COG4857">
    <property type="taxonomic scope" value="Bacteria"/>
</dbReference>
<dbReference type="HOGENOM" id="CLU_033681_0_0_6"/>
<dbReference type="OrthoDB" id="9777791at2"/>
<dbReference type="UniPathway" id="UPA00904">
    <property type="reaction ID" value="UER00872"/>
</dbReference>
<dbReference type="Proteomes" id="UP000000230">
    <property type="component" value="Chromosome"/>
</dbReference>
<dbReference type="GO" id="GO:0005524">
    <property type="term" value="F:ATP binding"/>
    <property type="evidence" value="ECO:0007669"/>
    <property type="project" value="UniProtKB-UniRule"/>
</dbReference>
<dbReference type="GO" id="GO:0046522">
    <property type="term" value="F:S-methyl-5-thioribose kinase activity"/>
    <property type="evidence" value="ECO:0007669"/>
    <property type="project" value="UniProtKB-UniRule"/>
</dbReference>
<dbReference type="GO" id="GO:0019509">
    <property type="term" value="P:L-methionine salvage from methylthioadenosine"/>
    <property type="evidence" value="ECO:0007669"/>
    <property type="project" value="UniProtKB-UniRule"/>
</dbReference>
<dbReference type="Gene3D" id="3.90.1200.10">
    <property type="match status" value="1"/>
</dbReference>
<dbReference type="Gene3D" id="3.30.200.20">
    <property type="entry name" value="Phosphorylase Kinase, domain 1"/>
    <property type="match status" value="1"/>
</dbReference>
<dbReference type="HAMAP" id="MF_01683">
    <property type="entry name" value="Salvage_MtnK"/>
    <property type="match status" value="1"/>
</dbReference>
<dbReference type="InterPro" id="IPR002575">
    <property type="entry name" value="Aminoglycoside_PTrfase"/>
</dbReference>
<dbReference type="InterPro" id="IPR011009">
    <property type="entry name" value="Kinase-like_dom_sf"/>
</dbReference>
<dbReference type="InterPro" id="IPR009212">
    <property type="entry name" value="Methylthioribose_kinase"/>
</dbReference>
<dbReference type="NCBIfam" id="TIGR01767">
    <property type="entry name" value="MTRK"/>
    <property type="match status" value="1"/>
</dbReference>
<dbReference type="PANTHER" id="PTHR34273">
    <property type="entry name" value="METHYLTHIORIBOSE KINASE"/>
    <property type="match status" value="1"/>
</dbReference>
<dbReference type="PANTHER" id="PTHR34273:SF2">
    <property type="entry name" value="METHYLTHIORIBOSE KINASE"/>
    <property type="match status" value="1"/>
</dbReference>
<dbReference type="Pfam" id="PF01636">
    <property type="entry name" value="APH"/>
    <property type="match status" value="1"/>
</dbReference>
<dbReference type="PIRSF" id="PIRSF031134">
    <property type="entry name" value="MTRK"/>
    <property type="match status" value="1"/>
</dbReference>
<dbReference type="SUPFAM" id="SSF56112">
    <property type="entry name" value="Protein kinase-like (PK-like)"/>
    <property type="match status" value="1"/>
</dbReference>
<gene>
    <name evidence="1" type="primary">mtnK</name>
    <name type="ordered locus">Ent638_1139</name>
</gene>
<sequence length="399" mass="44748">MSQYRTFTAQDAVEYAKQFGGLDNPSSLVEAQEIGDGNLNLVFKIFDAQGVSRIIVKQALPYVRCVGESWPLTLDRARLEAQTLVEHYQHSPQHTVKIHHYDPELAVMVMEDLSSHKIWRGELISGVYYPQASRQLGEYLAHTLFHTSDFYLHPHAKKAQVAKYINPEMCEITEDLFFNDPYQIHERNNYPAELEADVAALRSDDQLKIAVASLKHRFFSQAEALLHGDIHSGSIFVAEDSLKAIDAEFGYYGPIGFDIGTAIGNLLLNFCGLPGHLGIRDAAAAREQRLTDIQELWNTFSERFQALATEKTRDAALSVPGYASQFLKKVWTDAIGFCGTELIRRSVGLSHVADIDTIKDDAMRHECLRHAITLGKALIVIADRIDSAEALVARVRQYS</sequence>
<keyword id="KW-0028">Amino-acid biosynthesis</keyword>
<keyword id="KW-0067">ATP-binding</keyword>
<keyword id="KW-0418">Kinase</keyword>
<keyword id="KW-0486">Methionine biosynthesis</keyword>
<keyword id="KW-0547">Nucleotide-binding</keyword>
<keyword id="KW-0808">Transferase</keyword>
<proteinExistence type="inferred from homology"/>
<feature type="chain" id="PRO_0000357340" description="Methylthioribose kinase">
    <location>
        <begin position="1"/>
        <end position="399"/>
    </location>
</feature>
<feature type="binding site" evidence="1">
    <location>
        <position position="40"/>
    </location>
    <ligand>
        <name>ATP</name>
        <dbReference type="ChEBI" id="CHEBI:30616"/>
    </ligand>
</feature>
<feature type="binding site" evidence="1">
    <location>
        <position position="57"/>
    </location>
    <ligand>
        <name>ATP</name>
        <dbReference type="ChEBI" id="CHEBI:30616"/>
    </ligand>
</feature>
<feature type="binding site" evidence="1">
    <location>
        <begin position="111"/>
        <end position="113"/>
    </location>
    <ligand>
        <name>ATP</name>
        <dbReference type="ChEBI" id="CHEBI:30616"/>
    </ligand>
</feature>
<feature type="binding site" evidence="1">
    <location>
        <position position="229"/>
    </location>
    <ligand>
        <name>substrate</name>
    </ligand>
</feature>
<feature type="binding site" evidence="1">
    <location>
        <begin position="246"/>
        <end position="248"/>
    </location>
    <ligand>
        <name>ATP</name>
        <dbReference type="ChEBI" id="CHEBI:30616"/>
    </ligand>
</feature>
<feature type="binding site" evidence="1">
    <location>
        <position position="344"/>
    </location>
    <ligand>
        <name>substrate</name>
    </ligand>
</feature>
<name>MTNK_ENT38</name>
<organism>
    <name type="scientific">Enterobacter sp. (strain 638)</name>
    <dbReference type="NCBI Taxonomy" id="399742"/>
    <lineage>
        <taxon>Bacteria</taxon>
        <taxon>Pseudomonadati</taxon>
        <taxon>Pseudomonadota</taxon>
        <taxon>Gammaproteobacteria</taxon>
        <taxon>Enterobacterales</taxon>
        <taxon>Enterobacteriaceae</taxon>
        <taxon>Enterobacter</taxon>
    </lineage>
</organism>
<protein>
    <recommendedName>
        <fullName evidence="1">Methylthioribose kinase</fullName>
        <shortName evidence="1">MTR kinase</shortName>
        <ecNumber evidence="1">2.7.1.100</ecNumber>
    </recommendedName>
</protein>
<accession>A4W7Z0</accession>